<name>MTFA_ECOBW</name>
<reference key="1">
    <citation type="journal article" date="2009" name="J. Bacteriol.">
        <title>Genomic sequencing reveals regulatory mutations and recombinational events in the widely used MC4100 lineage of Escherichia coli K-12.</title>
        <authorList>
            <person name="Ferenci T."/>
            <person name="Zhou Z."/>
            <person name="Betteridge T."/>
            <person name="Ren Y."/>
            <person name="Liu Y."/>
            <person name="Feng L."/>
            <person name="Reeves P.R."/>
            <person name="Wang L."/>
        </authorList>
    </citation>
    <scope>NUCLEOTIDE SEQUENCE [LARGE SCALE GENOMIC DNA]</scope>
    <source>
        <strain>K12 / MC4100 / BW2952</strain>
    </source>
</reference>
<accession>C4ZQP5</accession>
<keyword id="KW-0031">Aminopeptidase</keyword>
<keyword id="KW-0963">Cytoplasm</keyword>
<keyword id="KW-0378">Hydrolase</keyword>
<keyword id="KW-0479">Metal-binding</keyword>
<keyword id="KW-0482">Metalloprotease</keyword>
<keyword id="KW-0645">Protease</keyword>
<keyword id="KW-0862">Zinc</keyword>
<feature type="chain" id="PRO_1000215650" description="Mlc titration factor A">
    <location>
        <begin position="1"/>
        <end position="265"/>
    </location>
</feature>
<feature type="binding site" evidence="1">
    <location>
        <position position="111"/>
    </location>
    <ligand>
        <name>Zn(2+)</name>
        <dbReference type="ChEBI" id="CHEBI:29105"/>
    </ligand>
</feature>
<feature type="binding site" evidence="1">
    <location>
        <position position="148"/>
    </location>
    <ligand>
        <name>Zn(2+)</name>
        <dbReference type="ChEBI" id="CHEBI:29105"/>
    </ligand>
</feature>
<feature type="binding site" evidence="1">
    <location>
        <position position="152"/>
    </location>
    <ligand>
        <name>Zn(2+)</name>
        <dbReference type="ChEBI" id="CHEBI:29105"/>
    </ligand>
</feature>
<feature type="binding site" evidence="1">
    <location>
        <position position="211"/>
    </location>
    <ligand>
        <name>Zn(2+)</name>
        <dbReference type="ChEBI" id="CHEBI:29105"/>
    </ligand>
</feature>
<gene>
    <name evidence="1" type="primary">mtfA</name>
    <name type="ordered locus">BWG_1776</name>
</gene>
<organism>
    <name type="scientific">Escherichia coli (strain K12 / MC4100 / BW2952)</name>
    <dbReference type="NCBI Taxonomy" id="595496"/>
    <lineage>
        <taxon>Bacteria</taxon>
        <taxon>Pseudomonadati</taxon>
        <taxon>Pseudomonadota</taxon>
        <taxon>Gammaproteobacteria</taxon>
        <taxon>Enterobacterales</taxon>
        <taxon>Enterobacteriaceae</taxon>
        <taxon>Escherichia</taxon>
    </lineage>
</organism>
<evidence type="ECO:0000255" key="1">
    <source>
        <dbReference type="HAMAP-Rule" id="MF_01593"/>
    </source>
</evidence>
<comment type="function">
    <text evidence="1">Involved in the modulation of the activity of the glucose-phosphotransferase system (glucose-PTS). Interacts with the transcriptional repressor Mlc, preventing its interaction with DNA and leading to the modulation of expression of genes regulated by Mlc, including ptsG, which encodes the PTS system glucose-specific EIICB component.</text>
</comment>
<comment type="function">
    <text evidence="1">Shows zinc-dependent metallopeptidase activity.</text>
</comment>
<comment type="cofactor">
    <cofactor evidence="1">
        <name>Zn(2+)</name>
        <dbReference type="ChEBI" id="CHEBI:29105"/>
    </cofactor>
    <text evidence="1">Binds 1 zinc ion per subunit.</text>
</comment>
<comment type="subunit">
    <text evidence="1">Interacts with Mlc.</text>
</comment>
<comment type="subcellular location">
    <subcellularLocation>
        <location evidence="1">Cytoplasm</location>
    </subcellularLocation>
</comment>
<comment type="similarity">
    <text evidence="1">Belongs to the MtfA family.</text>
</comment>
<dbReference type="EC" id="3.4.11.-" evidence="1"/>
<dbReference type="EMBL" id="CP001396">
    <property type="protein sequence ID" value="ACR62498.1"/>
    <property type="molecule type" value="Genomic_DNA"/>
</dbReference>
<dbReference type="RefSeq" id="WP_001302302.1">
    <property type="nucleotide sequence ID" value="NC_012759.1"/>
</dbReference>
<dbReference type="SMR" id="C4ZQP5"/>
<dbReference type="MEROPS" id="M90.001"/>
<dbReference type="GeneID" id="75205786"/>
<dbReference type="KEGG" id="ebw:BWG_1776"/>
<dbReference type="HOGENOM" id="CLU_063037_2_0_6"/>
<dbReference type="GO" id="GO:0005829">
    <property type="term" value="C:cytosol"/>
    <property type="evidence" value="ECO:0007669"/>
    <property type="project" value="TreeGrafter"/>
</dbReference>
<dbReference type="GO" id="GO:0004177">
    <property type="term" value="F:aminopeptidase activity"/>
    <property type="evidence" value="ECO:0007669"/>
    <property type="project" value="UniProtKB-UniRule"/>
</dbReference>
<dbReference type="GO" id="GO:0008237">
    <property type="term" value="F:metallopeptidase activity"/>
    <property type="evidence" value="ECO:0007669"/>
    <property type="project" value="UniProtKB-UniRule"/>
</dbReference>
<dbReference type="GO" id="GO:0008270">
    <property type="term" value="F:zinc ion binding"/>
    <property type="evidence" value="ECO:0007669"/>
    <property type="project" value="UniProtKB-UniRule"/>
</dbReference>
<dbReference type="GO" id="GO:0006508">
    <property type="term" value="P:proteolysis"/>
    <property type="evidence" value="ECO:0007669"/>
    <property type="project" value="UniProtKB-KW"/>
</dbReference>
<dbReference type="CDD" id="cd20169">
    <property type="entry name" value="Peptidase_M90_mtfA"/>
    <property type="match status" value="1"/>
</dbReference>
<dbReference type="FunFam" id="1.10.472.150:FF:000001">
    <property type="entry name" value="Protein MtfA"/>
    <property type="match status" value="1"/>
</dbReference>
<dbReference type="FunFam" id="3.40.390.10:FF:000012">
    <property type="entry name" value="Protein MtfA"/>
    <property type="match status" value="1"/>
</dbReference>
<dbReference type="Gene3D" id="3.40.390.10">
    <property type="entry name" value="Collagenase (Catalytic Domain)"/>
    <property type="match status" value="1"/>
</dbReference>
<dbReference type="Gene3D" id="1.10.472.150">
    <property type="entry name" value="Glucose-regulated metallo-peptidase M90, N-terminal domain"/>
    <property type="match status" value="1"/>
</dbReference>
<dbReference type="HAMAP" id="MF_01593">
    <property type="entry name" value="MtfA"/>
    <property type="match status" value="1"/>
</dbReference>
<dbReference type="InterPro" id="IPR024079">
    <property type="entry name" value="MetalloPept_cat_dom_sf"/>
</dbReference>
<dbReference type="InterPro" id="IPR057256">
    <property type="entry name" value="MtfA_enterob"/>
</dbReference>
<dbReference type="InterPro" id="IPR010384">
    <property type="entry name" value="MtfA_fam"/>
</dbReference>
<dbReference type="InterPro" id="IPR042252">
    <property type="entry name" value="MtfA_N"/>
</dbReference>
<dbReference type="NCBIfam" id="NF011939">
    <property type="entry name" value="PRK15410.1"/>
    <property type="match status" value="1"/>
</dbReference>
<dbReference type="PANTHER" id="PTHR30164">
    <property type="entry name" value="MTFA PEPTIDASE"/>
    <property type="match status" value="1"/>
</dbReference>
<dbReference type="PANTHER" id="PTHR30164:SF2">
    <property type="entry name" value="PROTEIN MTFA"/>
    <property type="match status" value="1"/>
</dbReference>
<dbReference type="Pfam" id="PF06167">
    <property type="entry name" value="Peptidase_M90"/>
    <property type="match status" value="1"/>
</dbReference>
<dbReference type="SUPFAM" id="SSF55486">
    <property type="entry name" value="Metalloproteases ('zincins'), catalytic domain"/>
    <property type="match status" value="1"/>
</dbReference>
<sequence>MIKWPWKVQESAHQTALPWQEALSIPLLTCLTEQEQSKLVTLAERFLQQKRLVPLQGFELDSLRSCRIALLFCLPVLELGLEWLDGFHEVLIYPAPFVVDDEWEDDIGLVHNQRIVQSGQSWQQGPIVLNWLDIQDSFDASGFNLIIHEVAHKLDTRNGDRASGVPFIPLREVAGWEHDLHAAMNNIQEEIELVGENAASIDAYAASDPAECFAVLSEYFFSAPELFAPRFPSLWQRFCQFYQQDPLQRLHHANDTDSFSATNVH</sequence>
<proteinExistence type="inferred from homology"/>
<protein>
    <recommendedName>
        <fullName evidence="1">Mlc titration factor A</fullName>
    </recommendedName>
    <alternativeName>
        <fullName evidence="1">Probable zinc metallopeptidase MtfA</fullName>
        <ecNumber evidence="1">3.4.11.-</ecNumber>
    </alternativeName>
</protein>